<reference key="1">
    <citation type="journal article" date="1992" name="Curr. Genet.">
        <title>Identification of a chloroplast-encoded secA gene homologue in a chromophytic alga: possible role in chloroplast protein translocation.</title>
        <authorList>
            <person name="Scaramuzzi C.D."/>
            <person name="Hiller R.G."/>
            <person name="Stokes H.W."/>
        </authorList>
    </citation>
    <scope>NUCLEOTIDE SEQUENCE [GENOMIC DNA]</scope>
</reference>
<comment type="function">
    <text evidence="1">Has a central role in coupling the hydrolysis of ATP to the transfer of proteins across the thylakoid membrane.</text>
</comment>
<comment type="catalytic activity">
    <reaction evidence="1">
        <text>ATP + H2O + cellular proteinSide 1 = ADP + phosphate + cellular proteinSide 2.</text>
        <dbReference type="EC" id="7.4.2.8"/>
    </reaction>
</comment>
<comment type="subcellular location">
    <subcellularLocation>
        <location evidence="1">Plastid</location>
        <location evidence="1">Chloroplast stroma</location>
    </subcellularLocation>
    <subcellularLocation>
        <location evidence="1">Plastid</location>
        <location evidence="1">Chloroplast thylakoid membrane</location>
        <topology evidence="1">Peripheral membrane protein</topology>
    </subcellularLocation>
    <text evidence="1">A minor fraction is associated with the chloroplast thylakoid membrane.</text>
</comment>
<comment type="similarity">
    <text evidence="1">Belongs to the SecA family.</text>
</comment>
<organism>
    <name type="scientific">Diacronema lutheri</name>
    <name type="common">Unicellular marine alga</name>
    <name type="synonym">Monochrysis lutheri</name>
    <dbReference type="NCBI Taxonomy" id="2081491"/>
    <lineage>
        <taxon>Eukaryota</taxon>
        <taxon>Haptista</taxon>
        <taxon>Haptophyta</taxon>
        <taxon>Pavlovales</taxon>
        <taxon>Pavlovaceae</taxon>
        <taxon>Diacronema</taxon>
    </lineage>
</organism>
<sequence>MLKDILRKTTQSDLYRYENIVKKINDLERVMKPLTNEELRAKTLGFRKSIEDGQSIDNILPEAFGLVREASLRILGLRHYDVQLIGGCILHDSKIAEMKTGEGKTLVAILPAYLNALSGKSVHIVTVNEYLAKRDSLSVGRVLSFLGLSVGLILADMNREERQENYKCDVIYTTNSELGFDYLRDNLVGNPSEKVQNGFEFAIIDEVDSVLIDEARTPLIISRSLETLNNIYLTAKNVAQAFEINTHYEIDKRNRNVYLNESGSKLAEKLLGVSSIYKFETGTYILNAIKAKEFYTKDKDYLVMRNQITIVDEFTGRILKGRRWGDGLHQAIEAKEGVTVGSETMTMASITYQNFFLFYKKLSGMTGTALTEAKEFKKIYNLSVDCVPINKKVNRIDKEDVVYKSLYAKWKAVLYESLSIHEQGRPLLIGTSNVKNSEIVSGLLKEYNIKHSLLNAKPENAANESEIIAQAGRKGSVTIATNMAGRGTDILLGGNPDFLTKGELRYIFRSIVLSLDDMTVPKNELINNLKYKYVISEKNRLDVEELIDKLKSAYTVPEKNRIGVEELIENIDESFQPVDKFEILIQKLYEKTKERYVRECLAEKEEVIQLGGLHIIGTEKHDSRRIDNQLRGRAGRQGDPGSSKFFLSFEDRLIEIFTTGGLKNMIKELDLEDDQPVEGKIVSLSIESAQKRIEDKNYQVRKQLFNYDNVLNLQRKVIYDERDRFLSLTDFKGLILQYLEKLVDDVVAEMERSENQEDKSRGIVLFCKKFICLPYSIDPELLSNLSKEEIKIFLNDQVKISYELKEIELESLRVGLSQSLEYAFLLQSIDQVWKEQLTRMELLKESIGWRAYGQRDPLLEYQKEAYRIFAIQTRKIRHSASHLIMCSTSFA</sequence>
<keyword id="KW-0067">ATP-binding</keyword>
<keyword id="KW-0150">Chloroplast</keyword>
<keyword id="KW-0472">Membrane</keyword>
<keyword id="KW-0547">Nucleotide-binding</keyword>
<keyword id="KW-0934">Plastid</keyword>
<keyword id="KW-0653">Protein transport</keyword>
<keyword id="KW-0793">Thylakoid</keyword>
<keyword id="KW-1278">Translocase</keyword>
<keyword id="KW-0811">Translocation</keyword>
<keyword id="KW-0813">Transport</keyword>
<feature type="chain" id="PRO_0000109625" description="Protein translocase subunit SecA">
    <location>
        <begin position="1"/>
        <end position="891"/>
    </location>
</feature>
<feature type="binding site" evidence="1">
    <location>
        <position position="83"/>
    </location>
    <ligand>
        <name>ATP</name>
        <dbReference type="ChEBI" id="CHEBI:30616"/>
    </ligand>
</feature>
<feature type="binding site" evidence="1">
    <location>
        <begin position="101"/>
        <end position="105"/>
    </location>
    <ligand>
        <name>ATP</name>
        <dbReference type="ChEBI" id="CHEBI:30616"/>
    </ligand>
</feature>
<feature type="binding site" evidence="1">
    <location>
        <position position="489"/>
    </location>
    <ligand>
        <name>ATP</name>
        <dbReference type="ChEBI" id="CHEBI:30616"/>
    </ligand>
</feature>
<name>SECA_DIALT</name>
<gene>
    <name evidence="1" type="primary">secA</name>
</gene>
<accession>Q01570</accession>
<proteinExistence type="inferred from homology"/>
<protein>
    <recommendedName>
        <fullName evidence="1">Protein translocase subunit SecA</fullName>
        <ecNumber evidence="1">7.4.2.8</ecNumber>
    </recommendedName>
</protein>
<evidence type="ECO:0000255" key="1">
    <source>
        <dbReference type="HAMAP-Rule" id="MF_01382"/>
    </source>
</evidence>
<geneLocation type="chloroplast"/>
<dbReference type="EC" id="7.4.2.8" evidence="1"/>
<dbReference type="EMBL" id="X65961">
    <property type="protein sequence ID" value="CAA46776.1"/>
    <property type="molecule type" value="Genomic_DNA"/>
</dbReference>
<dbReference type="PIR" id="S27029">
    <property type="entry name" value="S27029"/>
</dbReference>
<dbReference type="SMR" id="Q01570"/>
<dbReference type="GO" id="GO:0009570">
    <property type="term" value="C:chloroplast stroma"/>
    <property type="evidence" value="ECO:0007669"/>
    <property type="project" value="UniProtKB-SubCell"/>
</dbReference>
<dbReference type="GO" id="GO:0009535">
    <property type="term" value="C:chloroplast thylakoid membrane"/>
    <property type="evidence" value="ECO:0007669"/>
    <property type="project" value="UniProtKB-SubCell"/>
</dbReference>
<dbReference type="GO" id="GO:0005524">
    <property type="term" value="F:ATP binding"/>
    <property type="evidence" value="ECO:0007669"/>
    <property type="project" value="UniProtKB-UniRule"/>
</dbReference>
<dbReference type="GO" id="GO:0008564">
    <property type="term" value="F:protein-exporting ATPase activity"/>
    <property type="evidence" value="ECO:0007669"/>
    <property type="project" value="UniProtKB-EC"/>
</dbReference>
<dbReference type="GO" id="GO:0065002">
    <property type="term" value="P:intracellular protein transmembrane transport"/>
    <property type="evidence" value="ECO:0007669"/>
    <property type="project" value="UniProtKB-UniRule"/>
</dbReference>
<dbReference type="GO" id="GO:0017038">
    <property type="term" value="P:protein import"/>
    <property type="evidence" value="ECO:0007669"/>
    <property type="project" value="InterPro"/>
</dbReference>
<dbReference type="GO" id="GO:0006605">
    <property type="term" value="P:protein targeting"/>
    <property type="evidence" value="ECO:0007669"/>
    <property type="project" value="UniProtKB-UniRule"/>
</dbReference>
<dbReference type="CDD" id="cd17928">
    <property type="entry name" value="DEXDc_SecA"/>
    <property type="match status" value="1"/>
</dbReference>
<dbReference type="CDD" id="cd18803">
    <property type="entry name" value="SF2_C_secA"/>
    <property type="match status" value="1"/>
</dbReference>
<dbReference type="Gene3D" id="1.10.3060.10">
    <property type="entry name" value="Helical scaffold and wing domains of SecA"/>
    <property type="match status" value="1"/>
</dbReference>
<dbReference type="Gene3D" id="3.40.50.300">
    <property type="entry name" value="P-loop containing nucleotide triphosphate hydrolases"/>
    <property type="match status" value="2"/>
</dbReference>
<dbReference type="Gene3D" id="3.90.1440.10">
    <property type="entry name" value="SecA, preprotein cross-linking domain"/>
    <property type="match status" value="1"/>
</dbReference>
<dbReference type="HAMAP" id="MF_01382">
    <property type="entry name" value="SecA"/>
    <property type="match status" value="1"/>
</dbReference>
<dbReference type="InterPro" id="IPR014001">
    <property type="entry name" value="Helicase_ATP-bd"/>
</dbReference>
<dbReference type="InterPro" id="IPR027417">
    <property type="entry name" value="P-loop_NTPase"/>
</dbReference>
<dbReference type="InterPro" id="IPR000185">
    <property type="entry name" value="SecA"/>
</dbReference>
<dbReference type="InterPro" id="IPR020937">
    <property type="entry name" value="SecA_CS"/>
</dbReference>
<dbReference type="InterPro" id="IPR011115">
    <property type="entry name" value="SecA_DEAD"/>
</dbReference>
<dbReference type="InterPro" id="IPR014018">
    <property type="entry name" value="SecA_motor_DEAD"/>
</dbReference>
<dbReference type="InterPro" id="IPR011130">
    <property type="entry name" value="SecA_preprotein_X-link_dom"/>
</dbReference>
<dbReference type="InterPro" id="IPR044722">
    <property type="entry name" value="SecA_SF2_C"/>
</dbReference>
<dbReference type="InterPro" id="IPR011116">
    <property type="entry name" value="SecA_Wing/Scaffold"/>
</dbReference>
<dbReference type="InterPro" id="IPR036266">
    <property type="entry name" value="SecA_Wing/Scaffold_sf"/>
</dbReference>
<dbReference type="InterPro" id="IPR036670">
    <property type="entry name" value="SecA_X-link_sf"/>
</dbReference>
<dbReference type="NCBIfam" id="NF009538">
    <property type="entry name" value="PRK12904.1"/>
    <property type="match status" value="1"/>
</dbReference>
<dbReference type="NCBIfam" id="TIGR00963">
    <property type="entry name" value="secA"/>
    <property type="match status" value="1"/>
</dbReference>
<dbReference type="PANTHER" id="PTHR30612:SF0">
    <property type="entry name" value="CHLOROPLAST PROTEIN-TRANSPORTING ATPASE"/>
    <property type="match status" value="1"/>
</dbReference>
<dbReference type="PANTHER" id="PTHR30612">
    <property type="entry name" value="SECA INNER MEMBRANE COMPONENT OF SEC PROTEIN SECRETION SYSTEM"/>
    <property type="match status" value="1"/>
</dbReference>
<dbReference type="Pfam" id="PF21090">
    <property type="entry name" value="P-loop_SecA"/>
    <property type="match status" value="1"/>
</dbReference>
<dbReference type="Pfam" id="PF07517">
    <property type="entry name" value="SecA_DEAD"/>
    <property type="match status" value="1"/>
</dbReference>
<dbReference type="Pfam" id="PF01043">
    <property type="entry name" value="SecA_PP_bind"/>
    <property type="match status" value="1"/>
</dbReference>
<dbReference type="Pfam" id="PF07516">
    <property type="entry name" value="SecA_SW"/>
    <property type="match status" value="1"/>
</dbReference>
<dbReference type="PRINTS" id="PR00906">
    <property type="entry name" value="SECA"/>
</dbReference>
<dbReference type="SMART" id="SM00957">
    <property type="entry name" value="SecA_DEAD"/>
    <property type="match status" value="1"/>
</dbReference>
<dbReference type="SMART" id="SM00958">
    <property type="entry name" value="SecA_PP_bind"/>
    <property type="match status" value="1"/>
</dbReference>
<dbReference type="SUPFAM" id="SSF81886">
    <property type="entry name" value="Helical scaffold and wing domains of SecA"/>
    <property type="match status" value="1"/>
</dbReference>
<dbReference type="SUPFAM" id="SSF52540">
    <property type="entry name" value="P-loop containing nucleoside triphosphate hydrolases"/>
    <property type="match status" value="2"/>
</dbReference>
<dbReference type="SUPFAM" id="SSF81767">
    <property type="entry name" value="Pre-protein crosslinking domain of SecA"/>
    <property type="match status" value="1"/>
</dbReference>
<dbReference type="PROSITE" id="PS01312">
    <property type="entry name" value="SECA"/>
    <property type="match status" value="1"/>
</dbReference>
<dbReference type="PROSITE" id="PS51196">
    <property type="entry name" value="SECA_MOTOR_DEAD"/>
    <property type="match status" value="1"/>
</dbReference>